<evidence type="ECO:0000250" key="1">
    <source>
        <dbReference type="UniProtKB" id="P06922"/>
    </source>
</evidence>
<evidence type="ECO:0000256" key="2">
    <source>
        <dbReference type="SAM" id="MobiDB-lite"/>
    </source>
</evidence>
<evidence type="ECO:0000305" key="3"/>
<organismHost>
    <name type="scientific">Homo sapiens</name>
    <name type="common">Human</name>
    <dbReference type="NCBI Taxonomy" id="9606"/>
</organismHost>
<accession>P51897</accession>
<keyword id="KW-0244">Early protein</keyword>
<keyword id="KW-1035">Host cytoplasm</keyword>
<keyword id="KW-1079">Host G2/M cell cycle arrest by virus</keyword>
<keyword id="KW-1048">Host nucleus</keyword>
<keyword id="KW-0945">Host-virus interaction</keyword>
<keyword id="KW-1121">Modulation of host cell cycle by virus</keyword>
<keyword id="KW-0597">Phosphoprotein</keyword>
<keyword id="KW-1185">Reference proteome</keyword>
<sequence length="110" mass="11898">MADNSAHKKYPLLDLYTPPTTPPARPPKPRWGLRRDRNGNDAGLKQSGLGHSSSSSSSTSSSSSNRPRPTPPPRKPVHERVDQWTVTGPGTVTLQVKTPTGTQVILTVHL</sequence>
<organism>
    <name type="scientific">Human papillomavirus 29</name>
    <dbReference type="NCBI Taxonomy" id="37112"/>
    <lineage>
        <taxon>Viruses</taxon>
        <taxon>Monodnaviria</taxon>
        <taxon>Shotokuvirae</taxon>
        <taxon>Cossaviricota</taxon>
        <taxon>Papovaviricetes</taxon>
        <taxon>Zurhausenvirales</taxon>
        <taxon>Papillomaviridae</taxon>
        <taxon>Firstpapillomavirinae</taxon>
        <taxon>Alphapapillomavirus</taxon>
        <taxon>Alphapapillomavirus 2</taxon>
    </lineage>
</organism>
<dbReference type="EMBL" id="U31784">
    <property type="protein sequence ID" value="AAA79433.1"/>
    <property type="status" value="ALT_SEQ"/>
    <property type="molecule type" value="Genomic_DNA"/>
</dbReference>
<dbReference type="Proteomes" id="UP000009115">
    <property type="component" value="Segment"/>
</dbReference>
<dbReference type="GO" id="GO:0030430">
    <property type="term" value="C:host cell cytoplasm"/>
    <property type="evidence" value="ECO:0007669"/>
    <property type="project" value="UniProtKB-SubCell"/>
</dbReference>
<dbReference type="GO" id="GO:0042025">
    <property type="term" value="C:host cell nucleus"/>
    <property type="evidence" value="ECO:0007669"/>
    <property type="project" value="UniProtKB-SubCell"/>
</dbReference>
<dbReference type="GO" id="GO:0039592">
    <property type="term" value="P:symbiont-mediated arrest of host cell cycle during G2/M transition"/>
    <property type="evidence" value="ECO:0007669"/>
    <property type="project" value="UniProtKB-KW"/>
</dbReference>
<dbReference type="InterPro" id="IPR003861">
    <property type="entry name" value="Papilloma_E4"/>
</dbReference>
<dbReference type="Pfam" id="PF02711">
    <property type="entry name" value="Pap_E4"/>
    <property type="match status" value="1"/>
</dbReference>
<reference key="1">
    <citation type="submission" date="1995-10" db="EMBL/GenBank/DDBJ databases">
        <authorList>
            <person name="Delius H."/>
        </authorList>
    </citation>
    <scope>NUCLEOTIDE SEQUENCE [GENOMIC DNA]</scope>
</reference>
<feature type="chain" id="PRO_0000133268" description="Protein E4">
    <location>
        <begin position="1"/>
        <end position="110"/>
    </location>
</feature>
<feature type="region of interest" description="Disordered" evidence="2">
    <location>
        <begin position="1"/>
        <end position="94"/>
    </location>
</feature>
<feature type="compositionally biased region" description="Low complexity" evidence="2">
    <location>
        <begin position="52"/>
        <end position="67"/>
    </location>
</feature>
<feature type="compositionally biased region" description="Polar residues" evidence="2">
    <location>
        <begin position="84"/>
        <end position="94"/>
    </location>
</feature>
<proteinExistence type="inferred from homology"/>
<name>VE4_HPV29</name>
<protein>
    <recommendedName>
        <fullName>Protein E4</fullName>
    </recommendedName>
</protein>
<gene>
    <name type="primary">E4</name>
</gene>
<comment type="function">
    <text evidence="1">Contributes to multiple aspects of the viral life cycle including viral genome amplification, suppression of suprabasal cell differentiation and egress of newly formed virions. Induces host cell cycle arrest at the G2 phase by associating with and preventing the nuclear entry of host CDK1/cyclin B1 complexes. Inhibits cellular DNA replication by preventing loading of host replication licensing proteins MCM2 and MCM7 onto chromatin. Within the cytoplasm, associates with host kinase SRPK1, a splicing factor regulator, and inhibits its activity. Therefore, E4 favors expression of late viral transcripts by inhibiting SRPK1-mediated phosphorylation of host serine-arginine (SR) proteins that have critical roles in mRNA metabolism. Late in the infectious cycle, E4 also acts to diminish the integrity of the keratinocyte by disrupting the keratin cytoskeleton and inducing apoptosis through alteration of mitochondrial function to facilitate egress of the newly formed virions.</text>
</comment>
<comment type="subunit">
    <text evidence="1">Assembles into oligomeric complexes. Interacts with host CDK1. Interacts with host SRPK1; this interaction may favor expression of late viral transcripts. Interacts with host cytokeratin components KRT8 and KRT18.</text>
</comment>
<comment type="subcellular location">
    <subcellularLocation>
        <location evidence="1">Host cytoplasm</location>
    </subcellularLocation>
    <subcellularLocation>
        <location evidence="1">Host nucleus</location>
    </subcellularLocation>
</comment>
<comment type="PTM">
    <text evidence="1">Phosphorylated by host ERK. The phosphorylation triggers a structural change that enhances keratin binding and protein stability.</text>
</comment>
<comment type="miscellaneous">
    <text evidence="1">The major E4 form is first synthesized as an E1^E4 fusion protein from spliced E1^E4 transcripts, such that the first few amino acids of the E4 protein are derived from the N terminus of E1.</text>
</comment>
<comment type="similarity">
    <text evidence="3">Belongs to the papillomaviridae E4 protein family.</text>
</comment>
<comment type="sequence caution" evidence="3">
    <conflict type="erroneous initiation">
        <sequence resource="EMBL-CDS" id="AAA79433"/>
    </conflict>
</comment>